<proteinExistence type="predicted"/>
<sequence length="84" mass="9437">MPPHGHHHHGHHGHHEHVTYTTTPIVQPMVQPMPVYGQPPMMVQPQVVMGAPVVYPPTNVVIETSHHHGHHGHHGHHGHHGHFF</sequence>
<accession>Q86IJ6</accession>
<accession>Q559F8</accession>
<keyword id="KW-1185">Reference proteome</keyword>
<name>Y8291_DICDI</name>
<evidence type="ECO:0000256" key="1">
    <source>
        <dbReference type="SAM" id="MobiDB-lite"/>
    </source>
</evidence>
<feature type="chain" id="PRO_0000348153" description="Uncharacterized protein DDB_G0272720">
    <location>
        <begin position="1"/>
        <end position="84"/>
    </location>
</feature>
<feature type="region of interest" description="Disordered" evidence="1">
    <location>
        <begin position="1"/>
        <end position="22"/>
    </location>
</feature>
<feature type="region of interest" description="Disordered" evidence="1">
    <location>
        <begin position="64"/>
        <end position="84"/>
    </location>
</feature>
<feature type="compositionally biased region" description="Basic residues" evidence="1">
    <location>
        <begin position="1"/>
        <end position="15"/>
    </location>
</feature>
<feature type="compositionally biased region" description="Basic residues" evidence="1">
    <location>
        <begin position="67"/>
        <end position="84"/>
    </location>
</feature>
<gene>
    <name type="ORF">DDB_G0272720</name>
</gene>
<protein>
    <recommendedName>
        <fullName>Uncharacterized protein DDB_G0272720</fullName>
    </recommendedName>
</protein>
<organism>
    <name type="scientific">Dictyostelium discoideum</name>
    <name type="common">Social amoeba</name>
    <dbReference type="NCBI Taxonomy" id="44689"/>
    <lineage>
        <taxon>Eukaryota</taxon>
        <taxon>Amoebozoa</taxon>
        <taxon>Evosea</taxon>
        <taxon>Eumycetozoa</taxon>
        <taxon>Dictyostelia</taxon>
        <taxon>Dictyosteliales</taxon>
        <taxon>Dictyosteliaceae</taxon>
        <taxon>Dictyostelium</taxon>
    </lineage>
</organism>
<dbReference type="EMBL" id="AAFI02000008">
    <property type="protein sequence ID" value="EAL70997.1"/>
    <property type="molecule type" value="Genomic_DNA"/>
</dbReference>
<dbReference type="RefSeq" id="XP_644858.1">
    <property type="nucleotide sequence ID" value="XM_639766.1"/>
</dbReference>
<dbReference type="PaxDb" id="44689-DDB0238291"/>
<dbReference type="EnsemblProtists" id="EAL70997">
    <property type="protein sequence ID" value="EAL70997"/>
    <property type="gene ID" value="DDB_G0272720"/>
</dbReference>
<dbReference type="GeneID" id="8618537"/>
<dbReference type="KEGG" id="ddi:DDB_G0272720"/>
<dbReference type="dictyBase" id="DDB_G0272720"/>
<dbReference type="HOGENOM" id="CLU_189481_0_0_1"/>
<dbReference type="InParanoid" id="Q86IJ6"/>
<dbReference type="PRO" id="PR:Q86IJ6"/>
<dbReference type="Proteomes" id="UP000002195">
    <property type="component" value="Chromosome 2"/>
</dbReference>
<dbReference type="GO" id="GO:0006950">
    <property type="term" value="P:response to stress"/>
    <property type="evidence" value="ECO:0000318"/>
    <property type="project" value="GO_Central"/>
</dbReference>
<reference key="1">
    <citation type="journal article" date="2002" name="Nature">
        <title>Sequence and analysis of chromosome 2 of Dictyostelium discoideum.</title>
        <authorList>
            <person name="Gloeckner G."/>
            <person name="Eichinger L."/>
            <person name="Szafranski K."/>
            <person name="Pachebat J.A."/>
            <person name="Bankier A.T."/>
            <person name="Dear P.H."/>
            <person name="Lehmann R."/>
            <person name="Baumgart C."/>
            <person name="Parra G."/>
            <person name="Abril J.F."/>
            <person name="Guigo R."/>
            <person name="Kumpf K."/>
            <person name="Tunggal B."/>
            <person name="Cox E.C."/>
            <person name="Quail M.A."/>
            <person name="Platzer M."/>
            <person name="Rosenthal A."/>
            <person name="Noegel A.A."/>
        </authorList>
    </citation>
    <scope>NUCLEOTIDE SEQUENCE [LARGE SCALE GENOMIC DNA]</scope>
    <source>
        <strain>AX4</strain>
    </source>
</reference>
<reference key="2">
    <citation type="journal article" date="2005" name="Nature">
        <title>The genome of the social amoeba Dictyostelium discoideum.</title>
        <authorList>
            <person name="Eichinger L."/>
            <person name="Pachebat J.A."/>
            <person name="Gloeckner G."/>
            <person name="Rajandream M.A."/>
            <person name="Sucgang R."/>
            <person name="Berriman M."/>
            <person name="Song J."/>
            <person name="Olsen R."/>
            <person name="Szafranski K."/>
            <person name="Xu Q."/>
            <person name="Tunggal B."/>
            <person name="Kummerfeld S."/>
            <person name="Madera M."/>
            <person name="Konfortov B.A."/>
            <person name="Rivero F."/>
            <person name="Bankier A.T."/>
            <person name="Lehmann R."/>
            <person name="Hamlin N."/>
            <person name="Davies R."/>
            <person name="Gaudet P."/>
            <person name="Fey P."/>
            <person name="Pilcher K."/>
            <person name="Chen G."/>
            <person name="Saunders D."/>
            <person name="Sodergren E.J."/>
            <person name="Davis P."/>
            <person name="Kerhornou A."/>
            <person name="Nie X."/>
            <person name="Hall N."/>
            <person name="Anjard C."/>
            <person name="Hemphill L."/>
            <person name="Bason N."/>
            <person name="Farbrother P."/>
            <person name="Desany B."/>
            <person name="Just E."/>
            <person name="Morio T."/>
            <person name="Rost R."/>
            <person name="Churcher C.M."/>
            <person name="Cooper J."/>
            <person name="Haydock S."/>
            <person name="van Driessche N."/>
            <person name="Cronin A."/>
            <person name="Goodhead I."/>
            <person name="Muzny D.M."/>
            <person name="Mourier T."/>
            <person name="Pain A."/>
            <person name="Lu M."/>
            <person name="Harper D."/>
            <person name="Lindsay R."/>
            <person name="Hauser H."/>
            <person name="James K.D."/>
            <person name="Quiles M."/>
            <person name="Madan Babu M."/>
            <person name="Saito T."/>
            <person name="Buchrieser C."/>
            <person name="Wardroper A."/>
            <person name="Felder M."/>
            <person name="Thangavelu M."/>
            <person name="Johnson D."/>
            <person name="Knights A."/>
            <person name="Loulseged H."/>
            <person name="Mungall K.L."/>
            <person name="Oliver K."/>
            <person name="Price C."/>
            <person name="Quail M.A."/>
            <person name="Urushihara H."/>
            <person name="Hernandez J."/>
            <person name="Rabbinowitsch E."/>
            <person name="Steffen D."/>
            <person name="Sanders M."/>
            <person name="Ma J."/>
            <person name="Kohara Y."/>
            <person name="Sharp S."/>
            <person name="Simmonds M.N."/>
            <person name="Spiegler S."/>
            <person name="Tivey A."/>
            <person name="Sugano S."/>
            <person name="White B."/>
            <person name="Walker D."/>
            <person name="Woodward J.R."/>
            <person name="Winckler T."/>
            <person name="Tanaka Y."/>
            <person name="Shaulsky G."/>
            <person name="Schleicher M."/>
            <person name="Weinstock G.M."/>
            <person name="Rosenthal A."/>
            <person name="Cox E.C."/>
            <person name="Chisholm R.L."/>
            <person name="Gibbs R.A."/>
            <person name="Loomis W.F."/>
            <person name="Platzer M."/>
            <person name="Kay R.R."/>
            <person name="Williams J.G."/>
            <person name="Dear P.H."/>
            <person name="Noegel A.A."/>
            <person name="Barrell B.G."/>
            <person name="Kuspa A."/>
        </authorList>
    </citation>
    <scope>NUCLEOTIDE SEQUENCE [LARGE SCALE GENOMIC DNA]</scope>
    <source>
        <strain>AX4</strain>
    </source>
</reference>